<evidence type="ECO:0000255" key="1">
    <source>
        <dbReference type="HAMAP-Rule" id="MF_00811"/>
    </source>
</evidence>
<dbReference type="EC" id="2.3.1.117" evidence="1"/>
<dbReference type="EMBL" id="CP000010">
    <property type="protein sequence ID" value="AAU47910.1"/>
    <property type="molecule type" value="Genomic_DNA"/>
</dbReference>
<dbReference type="RefSeq" id="WP_004191680.1">
    <property type="nucleotide sequence ID" value="NC_006348.1"/>
</dbReference>
<dbReference type="RefSeq" id="YP_103206.1">
    <property type="nucleotide sequence ID" value="NC_006348.1"/>
</dbReference>
<dbReference type="SMR" id="Q62JB3"/>
<dbReference type="GeneID" id="92979291"/>
<dbReference type="KEGG" id="bma:BMA1566"/>
<dbReference type="PATRIC" id="fig|243160.12.peg.1613"/>
<dbReference type="eggNOG" id="COG2171">
    <property type="taxonomic scope" value="Bacteria"/>
</dbReference>
<dbReference type="HOGENOM" id="CLU_050859_0_1_4"/>
<dbReference type="UniPathway" id="UPA00034">
    <property type="reaction ID" value="UER00019"/>
</dbReference>
<dbReference type="Proteomes" id="UP000006693">
    <property type="component" value="Chromosome 1"/>
</dbReference>
<dbReference type="GO" id="GO:0005737">
    <property type="term" value="C:cytoplasm"/>
    <property type="evidence" value="ECO:0007669"/>
    <property type="project" value="UniProtKB-SubCell"/>
</dbReference>
<dbReference type="GO" id="GO:0008666">
    <property type="term" value="F:2,3,4,5-tetrahydropyridine-2,6-dicarboxylate N-succinyltransferase activity"/>
    <property type="evidence" value="ECO:0007669"/>
    <property type="project" value="UniProtKB-UniRule"/>
</dbReference>
<dbReference type="GO" id="GO:0016779">
    <property type="term" value="F:nucleotidyltransferase activity"/>
    <property type="evidence" value="ECO:0007669"/>
    <property type="project" value="TreeGrafter"/>
</dbReference>
<dbReference type="GO" id="GO:0019877">
    <property type="term" value="P:diaminopimelate biosynthetic process"/>
    <property type="evidence" value="ECO:0007669"/>
    <property type="project" value="UniProtKB-UniRule"/>
</dbReference>
<dbReference type="GO" id="GO:0009089">
    <property type="term" value="P:lysine biosynthetic process via diaminopimelate"/>
    <property type="evidence" value="ECO:0007669"/>
    <property type="project" value="UniProtKB-UniRule"/>
</dbReference>
<dbReference type="CDD" id="cd03350">
    <property type="entry name" value="LbH_THP_succinylT"/>
    <property type="match status" value="1"/>
</dbReference>
<dbReference type="Gene3D" id="2.160.10.10">
    <property type="entry name" value="Hexapeptide repeat proteins"/>
    <property type="match status" value="1"/>
</dbReference>
<dbReference type="Gene3D" id="1.10.166.10">
    <property type="entry name" value="Tetrahydrodipicolinate-N-succinyltransferase, N-terminal domain"/>
    <property type="match status" value="1"/>
</dbReference>
<dbReference type="HAMAP" id="MF_00811">
    <property type="entry name" value="DapD"/>
    <property type="match status" value="1"/>
</dbReference>
<dbReference type="InterPro" id="IPR005664">
    <property type="entry name" value="DapD_Trfase_Hexpep_rpt_fam"/>
</dbReference>
<dbReference type="InterPro" id="IPR001451">
    <property type="entry name" value="Hexapep"/>
</dbReference>
<dbReference type="InterPro" id="IPR018357">
    <property type="entry name" value="Hexapep_transf_CS"/>
</dbReference>
<dbReference type="InterPro" id="IPR023180">
    <property type="entry name" value="THP_succinylTrfase_dom1"/>
</dbReference>
<dbReference type="InterPro" id="IPR037133">
    <property type="entry name" value="THP_succinylTrfase_N_sf"/>
</dbReference>
<dbReference type="InterPro" id="IPR011004">
    <property type="entry name" value="Trimer_LpxA-like_sf"/>
</dbReference>
<dbReference type="NCBIfam" id="TIGR00965">
    <property type="entry name" value="dapD"/>
    <property type="match status" value="1"/>
</dbReference>
<dbReference type="NCBIfam" id="NF008808">
    <property type="entry name" value="PRK11830.1"/>
    <property type="match status" value="1"/>
</dbReference>
<dbReference type="PANTHER" id="PTHR19136:SF52">
    <property type="entry name" value="2,3,4,5-TETRAHYDROPYRIDINE-2,6-DICARBOXYLATE N-SUCCINYLTRANSFERASE"/>
    <property type="match status" value="1"/>
</dbReference>
<dbReference type="PANTHER" id="PTHR19136">
    <property type="entry name" value="MOLYBDENUM COFACTOR GUANYLYLTRANSFERASE"/>
    <property type="match status" value="1"/>
</dbReference>
<dbReference type="Pfam" id="PF14602">
    <property type="entry name" value="Hexapep_2"/>
    <property type="match status" value="1"/>
</dbReference>
<dbReference type="Pfam" id="PF14805">
    <property type="entry name" value="THDPS_N_2"/>
    <property type="match status" value="1"/>
</dbReference>
<dbReference type="SUPFAM" id="SSF51161">
    <property type="entry name" value="Trimeric LpxA-like enzymes"/>
    <property type="match status" value="1"/>
</dbReference>
<dbReference type="PROSITE" id="PS00101">
    <property type="entry name" value="HEXAPEP_TRANSFERASES"/>
    <property type="match status" value="1"/>
</dbReference>
<comment type="catalytic activity">
    <reaction evidence="1">
        <text>(S)-2,3,4,5-tetrahydrodipicolinate + succinyl-CoA + H2O = (S)-2-succinylamino-6-oxoheptanedioate + CoA</text>
        <dbReference type="Rhea" id="RHEA:17325"/>
        <dbReference type="ChEBI" id="CHEBI:15377"/>
        <dbReference type="ChEBI" id="CHEBI:15685"/>
        <dbReference type="ChEBI" id="CHEBI:16845"/>
        <dbReference type="ChEBI" id="CHEBI:57287"/>
        <dbReference type="ChEBI" id="CHEBI:57292"/>
        <dbReference type="EC" id="2.3.1.117"/>
    </reaction>
</comment>
<comment type="pathway">
    <text evidence="1">Amino-acid biosynthesis; L-lysine biosynthesis via DAP pathway; LL-2,6-diaminopimelate from (S)-tetrahydrodipicolinate (succinylase route): step 1/3.</text>
</comment>
<comment type="subunit">
    <text evidence="1">Homotrimer.</text>
</comment>
<comment type="subcellular location">
    <subcellularLocation>
        <location evidence="1">Cytoplasm</location>
    </subcellularLocation>
</comment>
<comment type="similarity">
    <text evidence="1">Belongs to the transferase hexapeptide repeat family.</text>
</comment>
<proteinExistence type="inferred from homology"/>
<gene>
    <name evidence="1" type="primary">dapD</name>
    <name type="ordered locus">BMA1566</name>
</gene>
<feature type="chain" id="PRO_0000196926" description="2,3,4,5-tetrahydropyridine-2,6-dicarboxylate N-succinyltransferase">
    <location>
        <begin position="1"/>
        <end position="275"/>
    </location>
</feature>
<feature type="binding site" evidence="1">
    <location>
        <position position="106"/>
    </location>
    <ligand>
        <name>substrate</name>
    </ligand>
</feature>
<feature type="binding site" evidence="1">
    <location>
        <position position="143"/>
    </location>
    <ligand>
        <name>substrate</name>
    </ligand>
</feature>
<protein>
    <recommendedName>
        <fullName evidence="1">2,3,4,5-tetrahydropyridine-2,6-dicarboxylate N-succinyltransferase</fullName>
        <ecNumber evidence="1">2.3.1.117</ecNumber>
    </recommendedName>
    <alternativeName>
        <fullName evidence="1">Tetrahydrodipicolinate N-succinyltransferase</fullName>
        <shortName evidence="1">THDP succinyltransferase</shortName>
        <shortName evidence="1">THP succinyltransferase</shortName>
        <shortName evidence="1">Tetrahydropicolinate succinylase</shortName>
    </alternativeName>
</protein>
<accession>Q62JB3</accession>
<reference key="1">
    <citation type="journal article" date="2004" name="Proc. Natl. Acad. Sci. U.S.A.">
        <title>Structural flexibility in the Burkholderia mallei genome.</title>
        <authorList>
            <person name="Nierman W.C."/>
            <person name="DeShazer D."/>
            <person name="Kim H.S."/>
            <person name="Tettelin H."/>
            <person name="Nelson K.E."/>
            <person name="Feldblyum T.V."/>
            <person name="Ulrich R.L."/>
            <person name="Ronning C.M."/>
            <person name="Brinkac L.M."/>
            <person name="Daugherty S.C."/>
            <person name="Davidsen T.D."/>
            <person name="DeBoy R.T."/>
            <person name="Dimitrov G."/>
            <person name="Dodson R.J."/>
            <person name="Durkin A.S."/>
            <person name="Gwinn M.L."/>
            <person name="Haft D.H."/>
            <person name="Khouri H.M."/>
            <person name="Kolonay J.F."/>
            <person name="Madupu R."/>
            <person name="Mohammoud Y."/>
            <person name="Nelson W.C."/>
            <person name="Radune D."/>
            <person name="Romero C.M."/>
            <person name="Sarria S."/>
            <person name="Selengut J."/>
            <person name="Shamblin C."/>
            <person name="Sullivan S.A."/>
            <person name="White O."/>
            <person name="Yu Y."/>
            <person name="Zafar N."/>
            <person name="Zhou L."/>
            <person name="Fraser C.M."/>
        </authorList>
    </citation>
    <scope>NUCLEOTIDE SEQUENCE [LARGE SCALE GENOMIC DNA]</scope>
    <source>
        <strain>ATCC 23344</strain>
    </source>
</reference>
<keyword id="KW-0012">Acyltransferase</keyword>
<keyword id="KW-0028">Amino-acid biosynthesis</keyword>
<keyword id="KW-0963">Cytoplasm</keyword>
<keyword id="KW-0220">Diaminopimelate biosynthesis</keyword>
<keyword id="KW-0457">Lysine biosynthesis</keyword>
<keyword id="KW-1185">Reference proteome</keyword>
<keyword id="KW-0677">Repeat</keyword>
<keyword id="KW-0808">Transferase</keyword>
<organism>
    <name type="scientific">Burkholderia mallei (strain ATCC 23344)</name>
    <dbReference type="NCBI Taxonomy" id="243160"/>
    <lineage>
        <taxon>Bacteria</taxon>
        <taxon>Pseudomonadati</taxon>
        <taxon>Pseudomonadota</taxon>
        <taxon>Betaproteobacteria</taxon>
        <taxon>Burkholderiales</taxon>
        <taxon>Burkholderiaceae</taxon>
        <taxon>Burkholderia</taxon>
        <taxon>pseudomallei group</taxon>
    </lineage>
</organism>
<sequence length="275" mass="29508">MSQQLQQIIDNAWENRAELSPKAASAEIREAVAHAIEQLDRGALRVAEKIDGAWTVHQWLKKAVLLSFRLEDNAPMPAGGYSQFYDKVPSKFANYTAEDFAAGGFRVVPPAIARRGSFIAKNVVLMPSYTNIGAYVDEGTMVDTWATVGSCAQIGKNVHLSGGVGIGGVLEPLQANPVIIEDNCFIGARSEVVEGVIVEENSVISMGVYLGQSTKIYDRETGEVTYGRIPAGSVVVAGNLPAKDGTHSLYCAVIVKKVDAKTRAKVGLNELLRGD</sequence>
<name>DAPD_BURMA</name>